<dbReference type="EMBL" id="AF198100">
    <property type="protein sequence ID" value="AAF44461.1"/>
    <property type="molecule type" value="Genomic_DNA"/>
</dbReference>
<dbReference type="RefSeq" id="NP_039080.1">
    <property type="nucleotide sequence ID" value="NC_002188.1"/>
</dbReference>
<dbReference type="GeneID" id="1486665"/>
<dbReference type="KEGG" id="vg:1486665"/>
<dbReference type="Proteomes" id="UP000008597">
    <property type="component" value="Segment"/>
</dbReference>
<dbReference type="InterPro" id="IPR007678">
    <property type="entry name" value="Poxvirus_G5"/>
</dbReference>
<dbReference type="Pfam" id="PF04599">
    <property type="entry name" value="Pox_G5"/>
    <property type="match status" value="1"/>
</dbReference>
<comment type="similarity">
    <text evidence="1">Belongs to the poxviruses G5 family.</text>
</comment>
<name>V117_FOWPN</name>
<sequence>MGIKNLKSVLLLKHSLKVLDSAVKSKEIYVDFLGLFMAIAYSVTSTAMLHHIIKEKFKFIHSIADNVTVFVDRGSISLKTSLREKRKQSLKNQYKRKQEELKNLEIAIDNLSVDDEMYEEQKESLFSKIDKNSYYMFLADKKNMEAIITDVLASLKNTEIYYCDHIDAEFMMCCRAREYYTNNGTWPSILSSDQDTICLVCVDTQEKILYDTKSVYKLSPNKYTSYLTKLIVLTNGCDFFRGLYGISINKDNYMRYELFTEFNRENAFRSIAHKNYSLNNSNTDENIDEISTNIDVIFDFINHYTSLNEDAYKFEDLPDIRVKDFLDVMVRSKWYEAKNKYDLGSDILQNIYNVYKVHRRNYEKEKETNILKMIESYKYRNIKINTITTFIKLLGIETSDSICVLGILAPSELYIGFEGRFYFNKTSIIKSSPKLININI</sequence>
<proteinExistence type="inferred from homology"/>
<keyword id="KW-1185">Reference proteome</keyword>
<feature type="chain" id="PRO_0000099533" description="Protein FPV117">
    <location>
        <begin position="1"/>
        <end position="440"/>
    </location>
</feature>
<protein>
    <recommendedName>
        <fullName>Protein FPV117</fullName>
    </recommendedName>
</protein>
<evidence type="ECO:0000305" key="1"/>
<organism>
    <name type="scientific">Fowlpox virus (strain NVSL)</name>
    <name type="common">FPV</name>
    <dbReference type="NCBI Taxonomy" id="928301"/>
    <lineage>
        <taxon>Viruses</taxon>
        <taxon>Varidnaviria</taxon>
        <taxon>Bamfordvirae</taxon>
        <taxon>Nucleocytoviricota</taxon>
        <taxon>Pokkesviricetes</taxon>
        <taxon>Chitovirales</taxon>
        <taxon>Poxviridae</taxon>
        <taxon>Chordopoxvirinae</taxon>
        <taxon>Avipoxvirus</taxon>
        <taxon>Fowlpox virus</taxon>
    </lineage>
</organism>
<organismHost>
    <name type="scientific">Vertebrata</name>
    <dbReference type="NCBI Taxonomy" id="7742"/>
</organismHost>
<gene>
    <name type="ordered locus">FPV117</name>
</gene>
<reference key="1">
    <citation type="journal article" date="2000" name="J. Virol.">
        <title>The genome of fowlpox virus.</title>
        <authorList>
            <person name="Afonso C.L."/>
            <person name="Tulman E.R."/>
            <person name="Lu Z."/>
            <person name="Zsak L."/>
            <person name="Kutish G.F."/>
            <person name="Rock D.L."/>
        </authorList>
    </citation>
    <scope>NUCLEOTIDE SEQUENCE [LARGE SCALE GENOMIC DNA]</scope>
</reference>
<accession>Q9J5A5</accession>